<name>CLPP1_PROMP</name>
<evidence type="ECO:0000255" key="1">
    <source>
        <dbReference type="HAMAP-Rule" id="MF_00444"/>
    </source>
</evidence>
<accession>Q7V1W0</accession>
<dbReference type="EC" id="3.4.21.92" evidence="1"/>
<dbReference type="EMBL" id="BX548174">
    <property type="protein sequence ID" value="CAE19201.1"/>
    <property type="molecule type" value="Genomic_DNA"/>
</dbReference>
<dbReference type="RefSeq" id="WP_011132376.1">
    <property type="nucleotide sequence ID" value="NZ_CP138922.1"/>
</dbReference>
<dbReference type="SMR" id="Q7V1W0"/>
<dbReference type="STRING" id="59919.PMM0742"/>
<dbReference type="MEROPS" id="S14.001"/>
<dbReference type="KEGG" id="pmm:PMM0742"/>
<dbReference type="eggNOG" id="COG0740">
    <property type="taxonomic scope" value="Bacteria"/>
</dbReference>
<dbReference type="HOGENOM" id="CLU_058707_3_2_3"/>
<dbReference type="OrthoDB" id="571524at2"/>
<dbReference type="Proteomes" id="UP000001026">
    <property type="component" value="Chromosome"/>
</dbReference>
<dbReference type="GO" id="GO:0005737">
    <property type="term" value="C:cytoplasm"/>
    <property type="evidence" value="ECO:0007669"/>
    <property type="project" value="UniProtKB-SubCell"/>
</dbReference>
<dbReference type="GO" id="GO:0009368">
    <property type="term" value="C:endopeptidase Clp complex"/>
    <property type="evidence" value="ECO:0007669"/>
    <property type="project" value="TreeGrafter"/>
</dbReference>
<dbReference type="GO" id="GO:0004176">
    <property type="term" value="F:ATP-dependent peptidase activity"/>
    <property type="evidence" value="ECO:0007669"/>
    <property type="project" value="InterPro"/>
</dbReference>
<dbReference type="GO" id="GO:0051117">
    <property type="term" value="F:ATPase binding"/>
    <property type="evidence" value="ECO:0007669"/>
    <property type="project" value="TreeGrafter"/>
</dbReference>
<dbReference type="GO" id="GO:0004252">
    <property type="term" value="F:serine-type endopeptidase activity"/>
    <property type="evidence" value="ECO:0007669"/>
    <property type="project" value="UniProtKB-UniRule"/>
</dbReference>
<dbReference type="GO" id="GO:0006515">
    <property type="term" value="P:protein quality control for misfolded or incompletely synthesized proteins"/>
    <property type="evidence" value="ECO:0007669"/>
    <property type="project" value="TreeGrafter"/>
</dbReference>
<dbReference type="CDD" id="cd07017">
    <property type="entry name" value="S14_ClpP_2"/>
    <property type="match status" value="1"/>
</dbReference>
<dbReference type="FunFam" id="3.90.226.10:FF:000001">
    <property type="entry name" value="ATP-dependent Clp protease proteolytic subunit"/>
    <property type="match status" value="1"/>
</dbReference>
<dbReference type="Gene3D" id="3.90.226.10">
    <property type="entry name" value="2-enoyl-CoA Hydratase, Chain A, domain 1"/>
    <property type="match status" value="1"/>
</dbReference>
<dbReference type="HAMAP" id="MF_00444">
    <property type="entry name" value="ClpP"/>
    <property type="match status" value="1"/>
</dbReference>
<dbReference type="InterPro" id="IPR001907">
    <property type="entry name" value="ClpP"/>
</dbReference>
<dbReference type="InterPro" id="IPR029045">
    <property type="entry name" value="ClpP/crotonase-like_dom_sf"/>
</dbReference>
<dbReference type="InterPro" id="IPR023562">
    <property type="entry name" value="ClpP/TepA"/>
</dbReference>
<dbReference type="InterPro" id="IPR018215">
    <property type="entry name" value="ClpP_Ser_AS"/>
</dbReference>
<dbReference type="NCBIfam" id="TIGR00493">
    <property type="entry name" value="clpP"/>
    <property type="match status" value="1"/>
</dbReference>
<dbReference type="NCBIfam" id="NF001368">
    <property type="entry name" value="PRK00277.1"/>
    <property type="match status" value="1"/>
</dbReference>
<dbReference type="NCBIfam" id="NF009203">
    <property type="entry name" value="PRK12551.1"/>
    <property type="match status" value="1"/>
</dbReference>
<dbReference type="NCBIfam" id="NF009205">
    <property type="entry name" value="PRK12553.1"/>
    <property type="match status" value="1"/>
</dbReference>
<dbReference type="PANTHER" id="PTHR10381">
    <property type="entry name" value="ATP-DEPENDENT CLP PROTEASE PROTEOLYTIC SUBUNIT"/>
    <property type="match status" value="1"/>
</dbReference>
<dbReference type="PANTHER" id="PTHR10381:SF70">
    <property type="entry name" value="ATP-DEPENDENT CLP PROTEASE PROTEOLYTIC SUBUNIT"/>
    <property type="match status" value="1"/>
</dbReference>
<dbReference type="Pfam" id="PF00574">
    <property type="entry name" value="CLP_protease"/>
    <property type="match status" value="1"/>
</dbReference>
<dbReference type="PRINTS" id="PR00127">
    <property type="entry name" value="CLPPROTEASEP"/>
</dbReference>
<dbReference type="SUPFAM" id="SSF52096">
    <property type="entry name" value="ClpP/crotonase"/>
    <property type="match status" value="1"/>
</dbReference>
<dbReference type="PROSITE" id="PS00381">
    <property type="entry name" value="CLP_PROTEASE_SER"/>
    <property type="match status" value="1"/>
</dbReference>
<gene>
    <name evidence="1" type="primary">clpP1</name>
    <name type="ordered locus">PMM0742</name>
</gene>
<keyword id="KW-0963">Cytoplasm</keyword>
<keyword id="KW-0378">Hydrolase</keyword>
<keyword id="KW-0645">Protease</keyword>
<keyword id="KW-0720">Serine protease</keyword>
<reference key="1">
    <citation type="journal article" date="2003" name="Nature">
        <title>Genome divergence in two Prochlorococcus ecotypes reflects oceanic niche differentiation.</title>
        <authorList>
            <person name="Rocap G."/>
            <person name="Larimer F.W."/>
            <person name="Lamerdin J.E."/>
            <person name="Malfatti S."/>
            <person name="Chain P."/>
            <person name="Ahlgren N.A."/>
            <person name="Arellano A."/>
            <person name="Coleman M."/>
            <person name="Hauser L."/>
            <person name="Hess W.R."/>
            <person name="Johnson Z.I."/>
            <person name="Land M.L."/>
            <person name="Lindell D."/>
            <person name="Post A.F."/>
            <person name="Regala W."/>
            <person name="Shah M."/>
            <person name="Shaw S.L."/>
            <person name="Steglich C."/>
            <person name="Sullivan M.B."/>
            <person name="Ting C.S."/>
            <person name="Tolonen A."/>
            <person name="Webb E.A."/>
            <person name="Zinser E.R."/>
            <person name="Chisholm S.W."/>
        </authorList>
    </citation>
    <scope>NUCLEOTIDE SEQUENCE [LARGE SCALE GENOMIC DNA]</scope>
    <source>
        <strain>CCMP1986 / NIES-2087 / MED4</strain>
    </source>
</reference>
<comment type="function">
    <text evidence="1">Cleaves peptides in various proteins in a process that requires ATP hydrolysis. Has a chymotrypsin-like activity. Plays a major role in the degradation of misfolded proteins.</text>
</comment>
<comment type="catalytic activity">
    <reaction evidence="1">
        <text>Hydrolysis of proteins to small peptides in the presence of ATP and magnesium. alpha-casein is the usual test substrate. In the absence of ATP, only oligopeptides shorter than five residues are hydrolyzed (such as succinyl-Leu-Tyr-|-NHMec, and Leu-Tyr-Leu-|-Tyr-Trp, in which cleavage of the -Tyr-|-Leu- and -Tyr-|-Trp bonds also occurs).</text>
        <dbReference type="EC" id="3.4.21.92"/>
    </reaction>
</comment>
<comment type="subunit">
    <text evidence="1">Fourteen ClpP subunits assemble into 2 heptameric rings which stack back to back to give a disk-like structure with a central cavity, resembling the structure of eukaryotic proteasomes.</text>
</comment>
<comment type="subcellular location">
    <subcellularLocation>
        <location evidence="1">Cytoplasm</location>
    </subcellularLocation>
</comment>
<comment type="similarity">
    <text evidence="1">Belongs to the peptidase S14 family.</text>
</comment>
<protein>
    <recommendedName>
        <fullName evidence="1">ATP-dependent Clp protease proteolytic subunit 1</fullName>
        <ecNumber evidence="1">3.4.21.92</ecNumber>
    </recommendedName>
    <alternativeName>
        <fullName evidence="1">Endopeptidase Clp 1</fullName>
    </alternativeName>
</protein>
<organism>
    <name type="scientific">Prochlorococcus marinus subsp. pastoris (strain CCMP1986 / NIES-2087 / MED4)</name>
    <dbReference type="NCBI Taxonomy" id="59919"/>
    <lineage>
        <taxon>Bacteria</taxon>
        <taxon>Bacillati</taxon>
        <taxon>Cyanobacteriota</taxon>
        <taxon>Cyanophyceae</taxon>
        <taxon>Synechococcales</taxon>
        <taxon>Prochlorococcaceae</taxon>
        <taxon>Prochlorococcus</taxon>
    </lineage>
</organism>
<proteinExistence type="inferred from homology"/>
<sequence>MIPLVLEESGGSERVFDIYSRLLRERIIFLGEQVTSDTANRIVAQLLFLEAEDPEKDIYMYINSPGGSVYDGLGIFDTMQHVKPDIHTVCVGLAASMGAFLLAAGTKGKRSSLRHSRIMIHQPLGGARGQASDIRIQADEILYLKERLNTELSERTGKELETIKGDTDRDFYMSPQEAVEYGLIDLVLDKKPVKNI</sequence>
<feature type="chain" id="PRO_0000179623" description="ATP-dependent Clp protease proteolytic subunit 1">
    <location>
        <begin position="1"/>
        <end position="196"/>
    </location>
</feature>
<feature type="active site" description="Nucleophile" evidence="1">
    <location>
        <position position="96"/>
    </location>
</feature>
<feature type="active site" evidence="1">
    <location>
        <position position="121"/>
    </location>
</feature>